<reference evidence="10 15" key="1">
    <citation type="journal article" date="2001" name="J. Biol. Chem.">
        <title>Syncoilin, a novel member of the intermediate filament superfamily that interacts with alpha-dystrobrevin in skeletal muscle.</title>
        <authorList>
            <person name="Newey S.E."/>
            <person name="Howman E.V."/>
            <person name="Ponting C.P."/>
            <person name="Benson M.A."/>
            <person name="Nawrotzki R."/>
            <person name="Loh N.Y."/>
            <person name="Davies K.E."/>
            <person name="Blake D.J."/>
        </authorList>
    </citation>
    <scope>NUCLEOTIDE SEQUENCE [MRNA] (ISOFORM 1)</scope>
    <scope>INTERACTION WITH DTNA</scope>
    <scope>SUBCELLULAR LOCATION</scope>
    <scope>TISSUE SPECIFICITY</scope>
    <scope>INDUCTION</scope>
</reference>
<reference evidence="10 13" key="2">
    <citation type="journal article" date="2005" name="Science">
        <title>The transcriptional landscape of the mammalian genome.</title>
        <authorList>
            <person name="Carninci P."/>
            <person name="Kasukawa T."/>
            <person name="Katayama S."/>
            <person name="Gough J."/>
            <person name="Frith M.C."/>
            <person name="Maeda N."/>
            <person name="Oyama R."/>
            <person name="Ravasi T."/>
            <person name="Lenhard B."/>
            <person name="Wells C."/>
            <person name="Kodzius R."/>
            <person name="Shimokawa K."/>
            <person name="Bajic V.B."/>
            <person name="Brenner S.E."/>
            <person name="Batalov S."/>
            <person name="Forrest A.R."/>
            <person name="Zavolan M."/>
            <person name="Davis M.J."/>
            <person name="Wilming L.G."/>
            <person name="Aidinis V."/>
            <person name="Allen J.E."/>
            <person name="Ambesi-Impiombato A."/>
            <person name="Apweiler R."/>
            <person name="Aturaliya R.N."/>
            <person name="Bailey T.L."/>
            <person name="Bansal M."/>
            <person name="Baxter L."/>
            <person name="Beisel K.W."/>
            <person name="Bersano T."/>
            <person name="Bono H."/>
            <person name="Chalk A.M."/>
            <person name="Chiu K.P."/>
            <person name="Choudhary V."/>
            <person name="Christoffels A."/>
            <person name="Clutterbuck D.R."/>
            <person name="Crowe M.L."/>
            <person name="Dalla E."/>
            <person name="Dalrymple B.P."/>
            <person name="de Bono B."/>
            <person name="Della Gatta G."/>
            <person name="di Bernardo D."/>
            <person name="Down T."/>
            <person name="Engstrom P."/>
            <person name="Fagiolini M."/>
            <person name="Faulkner G."/>
            <person name="Fletcher C.F."/>
            <person name="Fukushima T."/>
            <person name="Furuno M."/>
            <person name="Futaki S."/>
            <person name="Gariboldi M."/>
            <person name="Georgii-Hemming P."/>
            <person name="Gingeras T.R."/>
            <person name="Gojobori T."/>
            <person name="Green R.E."/>
            <person name="Gustincich S."/>
            <person name="Harbers M."/>
            <person name="Hayashi Y."/>
            <person name="Hensch T.K."/>
            <person name="Hirokawa N."/>
            <person name="Hill D."/>
            <person name="Huminiecki L."/>
            <person name="Iacono M."/>
            <person name="Ikeo K."/>
            <person name="Iwama A."/>
            <person name="Ishikawa T."/>
            <person name="Jakt M."/>
            <person name="Kanapin A."/>
            <person name="Katoh M."/>
            <person name="Kawasawa Y."/>
            <person name="Kelso J."/>
            <person name="Kitamura H."/>
            <person name="Kitano H."/>
            <person name="Kollias G."/>
            <person name="Krishnan S.P."/>
            <person name="Kruger A."/>
            <person name="Kummerfeld S.K."/>
            <person name="Kurochkin I.V."/>
            <person name="Lareau L.F."/>
            <person name="Lazarevic D."/>
            <person name="Lipovich L."/>
            <person name="Liu J."/>
            <person name="Liuni S."/>
            <person name="McWilliam S."/>
            <person name="Madan Babu M."/>
            <person name="Madera M."/>
            <person name="Marchionni L."/>
            <person name="Matsuda H."/>
            <person name="Matsuzawa S."/>
            <person name="Miki H."/>
            <person name="Mignone F."/>
            <person name="Miyake S."/>
            <person name="Morris K."/>
            <person name="Mottagui-Tabar S."/>
            <person name="Mulder N."/>
            <person name="Nakano N."/>
            <person name="Nakauchi H."/>
            <person name="Ng P."/>
            <person name="Nilsson R."/>
            <person name="Nishiguchi S."/>
            <person name="Nishikawa S."/>
            <person name="Nori F."/>
            <person name="Ohara O."/>
            <person name="Okazaki Y."/>
            <person name="Orlando V."/>
            <person name="Pang K.C."/>
            <person name="Pavan W.J."/>
            <person name="Pavesi G."/>
            <person name="Pesole G."/>
            <person name="Petrovsky N."/>
            <person name="Piazza S."/>
            <person name="Reed J."/>
            <person name="Reid J.F."/>
            <person name="Ring B.Z."/>
            <person name="Ringwald M."/>
            <person name="Rost B."/>
            <person name="Ruan Y."/>
            <person name="Salzberg S.L."/>
            <person name="Sandelin A."/>
            <person name="Schneider C."/>
            <person name="Schoenbach C."/>
            <person name="Sekiguchi K."/>
            <person name="Semple C.A."/>
            <person name="Seno S."/>
            <person name="Sessa L."/>
            <person name="Sheng Y."/>
            <person name="Shibata Y."/>
            <person name="Shimada H."/>
            <person name="Shimada K."/>
            <person name="Silva D."/>
            <person name="Sinclair B."/>
            <person name="Sperling S."/>
            <person name="Stupka E."/>
            <person name="Sugiura K."/>
            <person name="Sultana R."/>
            <person name="Takenaka Y."/>
            <person name="Taki K."/>
            <person name="Tammoja K."/>
            <person name="Tan S.L."/>
            <person name="Tang S."/>
            <person name="Taylor M.S."/>
            <person name="Tegner J."/>
            <person name="Teichmann S.A."/>
            <person name="Ueda H.R."/>
            <person name="van Nimwegen E."/>
            <person name="Verardo R."/>
            <person name="Wei C.L."/>
            <person name="Yagi K."/>
            <person name="Yamanishi H."/>
            <person name="Zabarovsky E."/>
            <person name="Zhu S."/>
            <person name="Zimmer A."/>
            <person name="Hide W."/>
            <person name="Bult C."/>
            <person name="Grimmond S.M."/>
            <person name="Teasdale R.D."/>
            <person name="Liu E.T."/>
            <person name="Brusic V."/>
            <person name="Quackenbush J."/>
            <person name="Wahlestedt C."/>
            <person name="Mattick J.S."/>
            <person name="Hume D.A."/>
            <person name="Kai C."/>
            <person name="Sasaki D."/>
            <person name="Tomaru Y."/>
            <person name="Fukuda S."/>
            <person name="Kanamori-Katayama M."/>
            <person name="Suzuki M."/>
            <person name="Aoki J."/>
            <person name="Arakawa T."/>
            <person name="Iida J."/>
            <person name="Imamura K."/>
            <person name="Itoh M."/>
            <person name="Kato T."/>
            <person name="Kawaji H."/>
            <person name="Kawagashira N."/>
            <person name="Kawashima T."/>
            <person name="Kojima M."/>
            <person name="Kondo S."/>
            <person name="Konno H."/>
            <person name="Nakano K."/>
            <person name="Ninomiya N."/>
            <person name="Nishio T."/>
            <person name="Okada M."/>
            <person name="Plessy C."/>
            <person name="Shibata K."/>
            <person name="Shiraki T."/>
            <person name="Suzuki S."/>
            <person name="Tagami M."/>
            <person name="Waki K."/>
            <person name="Watahiki A."/>
            <person name="Okamura-Oho Y."/>
            <person name="Suzuki H."/>
            <person name="Kawai J."/>
            <person name="Hayashizaki Y."/>
        </authorList>
    </citation>
    <scope>NUCLEOTIDE SEQUENCE [LARGE SCALE MRNA] (ISOFORMS 1; 2 AND 3)</scope>
    <source>
        <strain evidence="13">C57BL/6J</strain>
        <tissue evidence="14">Blastocyst</tissue>
        <tissue evidence="12">Embryo</tissue>
        <tissue evidence="13">Embryonic head</tissue>
    </source>
</reference>
<reference key="3">
    <citation type="journal article" date="2009" name="PLoS Biol.">
        <title>Lineage-specific biology revealed by a finished genome assembly of the mouse.</title>
        <authorList>
            <person name="Church D.M."/>
            <person name="Goodstadt L."/>
            <person name="Hillier L.W."/>
            <person name="Zody M.C."/>
            <person name="Goldstein S."/>
            <person name="She X."/>
            <person name="Bult C.J."/>
            <person name="Agarwala R."/>
            <person name="Cherry J.L."/>
            <person name="DiCuccio M."/>
            <person name="Hlavina W."/>
            <person name="Kapustin Y."/>
            <person name="Meric P."/>
            <person name="Maglott D."/>
            <person name="Birtle Z."/>
            <person name="Marques A.C."/>
            <person name="Graves T."/>
            <person name="Zhou S."/>
            <person name="Teague B."/>
            <person name="Potamousis K."/>
            <person name="Churas C."/>
            <person name="Place M."/>
            <person name="Herschleb J."/>
            <person name="Runnheim R."/>
            <person name="Forrest D."/>
            <person name="Amos-Landgraf J."/>
            <person name="Schwartz D.C."/>
            <person name="Cheng Z."/>
            <person name="Lindblad-Toh K."/>
            <person name="Eichler E.E."/>
            <person name="Ponting C.P."/>
        </authorList>
    </citation>
    <scope>NUCLEOTIDE SEQUENCE [LARGE SCALE GENOMIC DNA]</scope>
    <source>
        <strain>C57BL/6J</strain>
    </source>
</reference>
<reference evidence="10 11" key="4">
    <citation type="journal article" date="2004" name="Genome Res.">
        <title>The status, quality, and expansion of the NIH full-length cDNA project: the Mammalian Gene Collection (MGC).</title>
        <authorList>
            <consortium name="The MGC Project Team"/>
        </authorList>
    </citation>
    <scope>NUCLEOTIDE SEQUENCE [LARGE SCALE MRNA] (ISOFORM 1)</scope>
</reference>
<reference evidence="10" key="5">
    <citation type="journal article" date="2002" name="J. Biol. Chem.">
        <title>Association of syncoilin and desmin: linking intermediate filament proteins to the dystrophin-associated protein complex.</title>
        <authorList>
            <person name="Poon E."/>
            <person name="Howman E.V."/>
            <person name="Newey S.E."/>
            <person name="Davies K.E."/>
        </authorList>
    </citation>
    <scope>FUNCTION</scope>
    <scope>INTERACTION WITH DTNA</scope>
    <scope>SUBCELLULAR LOCATION</scope>
</reference>
<reference evidence="10" key="6">
    <citation type="journal article" date="2007" name="Neuromuscul. Disord.">
        <title>Intermediate filament-like protein syncoilin in normal and myopathic striated muscle.</title>
        <authorList>
            <person name="McCullagh K.J.A."/>
            <person name="Edwards B."/>
            <person name="Poon E."/>
            <person name="Lovering R.M."/>
            <person name="Paulin D."/>
            <person name="Davies K.E."/>
        </authorList>
    </citation>
    <scope>SUBCELLULAR LOCATION</scope>
    <scope>INDUCTION</scope>
</reference>
<reference key="7">
    <citation type="journal article" date="2008" name="Am. J. Physiol.">
        <title>Syncoilin is required for generating maximum isometric stress in skeletal muscle but dispensable for muscle cytoarchitecture.</title>
        <authorList>
            <person name="Zhang J."/>
            <person name="Bang M.L."/>
            <person name="Gokhin D.S."/>
            <person name="Lu Y."/>
            <person name="Cui L."/>
            <person name="Li X."/>
            <person name="Gu Y."/>
            <person name="Dalton N.D."/>
            <person name="Scimia M.C."/>
            <person name="Peterson K.L."/>
            <person name="Lieber R.L."/>
            <person name="Chen J."/>
        </authorList>
    </citation>
    <scope>FUNCTION</scope>
    <scope>DISRUPTION PHENOTYPE</scope>
</reference>
<reference key="8">
    <citation type="journal article" date="2010" name="Cell">
        <title>A tissue-specific atlas of mouse protein phosphorylation and expression.</title>
        <authorList>
            <person name="Huttlin E.L."/>
            <person name="Jedrychowski M.P."/>
            <person name="Elias J.E."/>
            <person name="Goswami T."/>
            <person name="Rad R."/>
            <person name="Beausoleil S.A."/>
            <person name="Villen J."/>
            <person name="Haas W."/>
            <person name="Sowa M.E."/>
            <person name="Gygi S.P."/>
        </authorList>
    </citation>
    <scope>PHOSPHORYLATION [LARGE SCALE ANALYSIS] AT SER-32</scope>
    <scope>IDENTIFICATION BY MASS SPECTROMETRY [LARGE SCALE ANALYSIS]</scope>
    <source>
        <tissue>Brown adipose tissue</tissue>
        <tissue>Heart</tissue>
        <tissue>Kidney</tissue>
        <tissue>Lung</tissue>
        <tissue>Spleen</tissue>
        <tissue>Testis</tissue>
    </source>
</reference>
<sequence length="470" mass="53630">MASPEPLRGGDGARASREPHTEASFPLQESESPKEAKTFNPEATLSLEGTVNLEDILYLGASGDFEESFYEEEYEKPALTLFIDESRQPDEALGLEEPVRPEEMLSVEESVTPDEVQISEQPVEPAKSPTACEGEMVATEGSLPAQPIPNTEEDPLSVEDLERLEARFQQCVQAVSQLEEERDQLIHELVLLREPALQEVQQVHQDILAAYKLHAQAELERDGLREEIRTVKQKLFKVTKECVAYQYQLECRQQDVAQFADCREALTTRAAQLSEELTQLRDACQKQKEQLQQQLEAPPTQSDGHFLQESRRLSTQFENLMAESRQGLEEEYEPQLLRLLERKEAGTKALQDTQAEIQEMREALRPLEAEARQLQLQNRNLEDQITLVRQKRDEEVQQYREQLEEMEERQRQLRSGVQVQQQKNKEMERLRMSLAEELSTYKAMLPKSLEQADAPTSQAGGVEAQSPGTV</sequence>
<feature type="chain" id="PRO_0000306181" description="Syncoilin">
    <location>
        <begin position="1"/>
        <end position="470"/>
    </location>
</feature>
<feature type="domain" description="IF rod" evidence="2">
    <location>
        <begin position="157"/>
        <end position="452"/>
    </location>
</feature>
<feature type="region of interest" description="Head">
    <location>
        <begin position="1"/>
        <end position="148"/>
    </location>
</feature>
<feature type="region of interest" description="Disordered" evidence="3">
    <location>
        <begin position="1"/>
        <end position="43"/>
    </location>
</feature>
<feature type="region of interest" description="Coil 1A">
    <location>
        <begin position="158"/>
        <end position="192"/>
    </location>
</feature>
<feature type="region of interest" description="Linker 1">
    <location>
        <begin position="193"/>
        <end position="219"/>
    </location>
</feature>
<feature type="region of interest" description="Coil 1b">
    <location>
        <begin position="220"/>
        <end position="297"/>
    </location>
</feature>
<feature type="region of interest" description="Linker 2">
    <location>
        <begin position="298"/>
        <end position="337"/>
    </location>
</feature>
<feature type="region of interest" description="Coil 2">
    <location>
        <begin position="338"/>
        <end position="445"/>
    </location>
</feature>
<feature type="region of interest" description="Disordered" evidence="3">
    <location>
        <begin position="446"/>
        <end position="470"/>
    </location>
</feature>
<feature type="region of interest" description="Tail">
    <location>
        <begin position="446"/>
        <end position="470"/>
    </location>
</feature>
<feature type="modified residue" description="Phosphoserine" evidence="16">
    <location>
        <position position="32"/>
    </location>
</feature>
<feature type="modified residue" description="Phosphoserine" evidence="1">
    <location>
        <position position="314"/>
    </location>
</feature>
<feature type="splice variant" id="VSP_052550" description="In isoform 3." evidence="9">
    <location>
        <begin position="1"/>
        <end position="103"/>
    </location>
</feature>
<feature type="splice variant" id="VSP_052551" description="In isoform 2." evidence="9">
    <original>AMLPKSLEQAD</original>
    <variation>SVFSASQVSQI</variation>
    <location>
        <begin position="443"/>
        <end position="453"/>
    </location>
</feature>
<feature type="splice variant" id="VSP_052552" description="In isoform 2." evidence="9">
    <location>
        <begin position="454"/>
        <end position="470"/>
    </location>
</feature>
<feature type="sequence conflict" description="In Ref. 4; AAI06856." evidence="10" ref="4">
    <original>A</original>
    <variation>E</variation>
    <location>
        <position position="23"/>
    </location>
</feature>
<feature type="sequence conflict" description="In Ref. 4; AAI06856." evidence="10" ref="4">
    <original>L</original>
    <variation>Q</variation>
    <location>
        <position position="79"/>
    </location>
</feature>
<feature type="sequence conflict" description="In Ref. 2; BAC38387." evidence="10" ref="2">
    <original>Q</original>
    <variation>K</variation>
    <location>
        <position position="377"/>
    </location>
</feature>
<feature type="sequence conflict" description="In Ref. 4; AAI06856." evidence="10" ref="4">
    <original>M</original>
    <variation>T</variation>
    <location>
        <position position="432"/>
    </location>
</feature>
<accession>Q9EPM5</accession>
<accession>Q3KP79</accession>
<accession>Q3TKN1</accession>
<accession>Q3TUH9</accession>
<accession>Q8C4J4</accession>
<accession>Q9CT88</accession>
<keyword id="KW-0025">Alternative splicing</keyword>
<keyword id="KW-0175">Coiled coil</keyword>
<keyword id="KW-0963">Cytoplasm</keyword>
<keyword id="KW-0403">Intermediate filament</keyword>
<keyword id="KW-0597">Phosphoprotein</keyword>
<keyword id="KW-1185">Reference proteome</keyword>
<protein>
    <recommendedName>
        <fullName>Syncoilin</fullName>
    </recommendedName>
    <alternativeName>
        <fullName>Syncoilin intermediate filament 1</fullName>
    </alternativeName>
    <alternativeName>
        <fullName>Syncoilin-1</fullName>
    </alternativeName>
</protein>
<gene>
    <name type="primary">Sync</name>
    <name type="synonym">Sync1</name>
</gene>
<evidence type="ECO:0000250" key="1">
    <source>
        <dbReference type="UniProtKB" id="Q9H7C4"/>
    </source>
</evidence>
<evidence type="ECO:0000255" key="2">
    <source>
        <dbReference type="PROSITE-ProRule" id="PRU01188"/>
    </source>
</evidence>
<evidence type="ECO:0000256" key="3">
    <source>
        <dbReference type="SAM" id="MobiDB-lite"/>
    </source>
</evidence>
<evidence type="ECO:0000269" key="4">
    <source>
    </source>
</evidence>
<evidence type="ECO:0000269" key="5">
    <source>
    </source>
</evidence>
<evidence type="ECO:0000269" key="6">
    <source>
    </source>
</evidence>
<evidence type="ECO:0000269" key="7">
    <source>
    </source>
</evidence>
<evidence type="ECO:0000269" key="8">
    <source>
    </source>
</evidence>
<evidence type="ECO:0000303" key="9">
    <source>
    </source>
</evidence>
<evidence type="ECO:0000305" key="10"/>
<evidence type="ECO:0000312" key="11">
    <source>
        <dbReference type="EMBL" id="AAI06856.1"/>
    </source>
</evidence>
<evidence type="ECO:0000312" key="12">
    <source>
        <dbReference type="EMBL" id="BAB23246.1"/>
    </source>
</evidence>
<evidence type="ECO:0000312" key="13">
    <source>
        <dbReference type="EMBL" id="BAC38387.1"/>
    </source>
</evidence>
<evidence type="ECO:0000312" key="14">
    <source>
        <dbReference type="EMBL" id="BAE39114.1"/>
    </source>
</evidence>
<evidence type="ECO:0000312" key="15">
    <source>
        <dbReference type="EMBL" id="CAC17787.1"/>
    </source>
</evidence>
<evidence type="ECO:0007744" key="16">
    <source>
    </source>
</evidence>
<name>SYNCI_MOUSE</name>
<comment type="function">
    <text evidence="5 8">Atypical type III intermediate filament (IF) protein that may play a supportive role in the efficient coupling of mechanical stress between the myofibril and fiber exterior. May facilitate lateral force transmission during skeletal muscle contraction. Does not form homofilaments nor heterofilaments with other IF proteins.</text>
</comment>
<comment type="subunit">
    <text evidence="4 5">May link the dystrophin-associated glycoprotein complex (DAPC) to intracellular desmin (DES) filaments. Interacts with DES and DTNA.</text>
</comment>
<comment type="interaction">
    <interactant intactId="EBI-7424051">
        <id>Q9EPM5</id>
    </interactant>
    <interactant intactId="EBI-1634736">
        <id>P15331</id>
        <label>Prph</label>
    </interactant>
    <organismsDiffer>false</organismsDiffer>
    <experiments>3</experiments>
</comment>
<comment type="subcellular location">
    <subcellularLocation>
        <location evidence="4 5 7">Cytoplasm</location>
        <location evidence="4 5 7">Perinuclear region</location>
    </subcellularLocation>
    <text evidence="4 5 7">In skeletal muscle, colocalizes with DES and DTNA, and is localized at the myotendinous and neuromuscular junctions, sarcolemma and Z-lines. In myotubes, detected in a punctate cytoplasmic pattern.</text>
</comment>
<comment type="alternative products">
    <event type="alternative splicing"/>
    <isoform>
        <id>Q9EPM5-1</id>
        <name evidence="4">1</name>
        <sequence type="displayed"/>
    </isoform>
    <isoform>
        <id>Q9EPM5-2</id>
        <name evidence="6">2</name>
        <sequence type="described" ref="VSP_052551 VSP_052552"/>
    </isoform>
    <isoform>
        <id>Q9EPM5-3</id>
        <name evidence="6">3</name>
        <sequence type="described" ref="VSP_052550"/>
    </isoform>
</comment>
<comment type="tissue specificity">
    <text evidence="4">Detected strongly in skeletal muscle and heart and weakly in lung (at protein level). Highly expressed in skeletal muscle and lung and weakly in lung and testis.</text>
</comment>
<comment type="induction">
    <text evidence="4 7">Up-regulated in dystrophic muscle (at protein level).</text>
</comment>
<comment type="disruption phenotype">
    <text evidence="8">Displays no obvious abnormalities, have a reduced capacity to generate force during isometric contractions in skeletal muscle.</text>
</comment>
<comment type="similarity">
    <text evidence="2">Belongs to the intermediate filament family.</text>
</comment>
<proteinExistence type="evidence at protein level"/>
<organism>
    <name type="scientific">Mus musculus</name>
    <name type="common">Mouse</name>
    <dbReference type="NCBI Taxonomy" id="10090"/>
    <lineage>
        <taxon>Eukaryota</taxon>
        <taxon>Metazoa</taxon>
        <taxon>Chordata</taxon>
        <taxon>Craniata</taxon>
        <taxon>Vertebrata</taxon>
        <taxon>Euteleostomi</taxon>
        <taxon>Mammalia</taxon>
        <taxon>Eutheria</taxon>
        <taxon>Euarchontoglires</taxon>
        <taxon>Glires</taxon>
        <taxon>Rodentia</taxon>
        <taxon>Myomorpha</taxon>
        <taxon>Muroidea</taxon>
        <taxon>Muridae</taxon>
        <taxon>Murinae</taxon>
        <taxon>Mus</taxon>
        <taxon>Mus</taxon>
    </lineage>
</organism>
<dbReference type="EMBL" id="AJ251641">
    <property type="protein sequence ID" value="CAC17787.1"/>
    <property type="molecule type" value="mRNA"/>
</dbReference>
<dbReference type="EMBL" id="AK004279">
    <property type="protein sequence ID" value="BAB23246.1"/>
    <property type="molecule type" value="mRNA"/>
</dbReference>
<dbReference type="EMBL" id="AK081983">
    <property type="protein sequence ID" value="BAC38387.1"/>
    <property type="molecule type" value="mRNA"/>
</dbReference>
<dbReference type="EMBL" id="AK160756">
    <property type="protein sequence ID" value="BAE35992.1"/>
    <property type="molecule type" value="mRNA"/>
</dbReference>
<dbReference type="EMBL" id="AK166916">
    <property type="protein sequence ID" value="BAE39114.1"/>
    <property type="molecule type" value="mRNA"/>
</dbReference>
<dbReference type="EMBL" id="AL607123">
    <property type="status" value="NOT_ANNOTATED_CDS"/>
    <property type="molecule type" value="Genomic_DNA"/>
</dbReference>
<dbReference type="EMBL" id="BC106855">
    <property type="protein sequence ID" value="AAI06856.1"/>
    <property type="molecule type" value="mRNA"/>
</dbReference>
<dbReference type="CCDS" id="CCDS18687.1">
    <molecule id="Q9EPM5-1"/>
</dbReference>
<dbReference type="RefSeq" id="NP_075974.3">
    <molecule id="Q9EPM5-1"/>
    <property type="nucleotide sequence ID" value="NM_023485.3"/>
</dbReference>
<dbReference type="SMR" id="Q9EPM5"/>
<dbReference type="BioGRID" id="213071">
    <property type="interactions" value="4"/>
</dbReference>
<dbReference type="FunCoup" id="Q9EPM5">
    <property type="interactions" value="98"/>
</dbReference>
<dbReference type="IntAct" id="Q9EPM5">
    <property type="interactions" value="1"/>
</dbReference>
<dbReference type="MINT" id="Q9EPM5"/>
<dbReference type="STRING" id="10090.ENSMUSP00000099659"/>
<dbReference type="GlyGen" id="Q9EPM5">
    <property type="glycosylation" value="1 site, 1 O-linked glycan (1 site)"/>
</dbReference>
<dbReference type="iPTMnet" id="Q9EPM5"/>
<dbReference type="PhosphoSitePlus" id="Q9EPM5"/>
<dbReference type="jPOST" id="Q9EPM5"/>
<dbReference type="PaxDb" id="10090-ENSMUSP00000099659"/>
<dbReference type="ProteomicsDB" id="263179">
    <molecule id="Q9EPM5-1"/>
</dbReference>
<dbReference type="ProteomicsDB" id="263180">
    <molecule id="Q9EPM5-2"/>
</dbReference>
<dbReference type="ProteomicsDB" id="263181">
    <molecule id="Q9EPM5-3"/>
</dbReference>
<dbReference type="Antibodypedia" id="54803">
    <property type="antibodies" value="173 antibodies from 20 providers"/>
</dbReference>
<dbReference type="DNASU" id="68828"/>
<dbReference type="Ensembl" id="ENSMUST00000102599.4">
    <molecule id="Q9EPM5-1"/>
    <property type="protein sequence ID" value="ENSMUSP00000099659.4"/>
    <property type="gene ID" value="ENSMUSG00000001333.10"/>
</dbReference>
<dbReference type="GeneID" id="68828"/>
<dbReference type="KEGG" id="mmu:68828"/>
<dbReference type="UCSC" id="uc008uwq.1">
    <molecule id="Q9EPM5-2"/>
    <property type="organism name" value="mouse"/>
</dbReference>
<dbReference type="UCSC" id="uc008uwr.1">
    <molecule id="Q9EPM5-1"/>
    <property type="organism name" value="mouse"/>
</dbReference>
<dbReference type="AGR" id="MGI:1916078"/>
<dbReference type="CTD" id="81493"/>
<dbReference type="MGI" id="MGI:1916078">
    <property type="gene designation" value="Sync"/>
</dbReference>
<dbReference type="VEuPathDB" id="HostDB:ENSMUSG00000001333"/>
<dbReference type="eggNOG" id="ENOG502RKZJ">
    <property type="taxonomic scope" value="Eukaryota"/>
</dbReference>
<dbReference type="GeneTree" id="ENSGT00390000018108"/>
<dbReference type="HOGENOM" id="CLU_562526_0_0_1"/>
<dbReference type="InParanoid" id="Q9EPM5"/>
<dbReference type="OMA" id="GGMETKS"/>
<dbReference type="OrthoDB" id="8842296at2759"/>
<dbReference type="PhylomeDB" id="Q9EPM5"/>
<dbReference type="BioGRID-ORCS" id="68828">
    <property type="hits" value="1 hit in 77 CRISPR screens"/>
</dbReference>
<dbReference type="PRO" id="PR:Q9EPM5"/>
<dbReference type="Proteomes" id="UP000000589">
    <property type="component" value="Chromosome 4"/>
</dbReference>
<dbReference type="RNAct" id="Q9EPM5">
    <property type="molecule type" value="protein"/>
</dbReference>
<dbReference type="Bgee" id="ENSMUSG00000001333">
    <property type="expression patterns" value="Expressed in lumbar dorsal root ganglion and 115 other cell types or tissues"/>
</dbReference>
<dbReference type="ExpressionAtlas" id="Q9EPM5">
    <property type="expression patterns" value="baseline and differential"/>
</dbReference>
<dbReference type="GO" id="GO:0005737">
    <property type="term" value="C:cytoplasm"/>
    <property type="evidence" value="ECO:0000314"/>
    <property type="project" value="MGI"/>
</dbReference>
<dbReference type="GO" id="GO:0005829">
    <property type="term" value="C:cytosol"/>
    <property type="evidence" value="ECO:0000314"/>
    <property type="project" value="MGI"/>
</dbReference>
<dbReference type="GO" id="GO:0005882">
    <property type="term" value="C:intermediate filament"/>
    <property type="evidence" value="ECO:0000250"/>
    <property type="project" value="MGI"/>
</dbReference>
<dbReference type="GO" id="GO:0031594">
    <property type="term" value="C:neuromuscular junction"/>
    <property type="evidence" value="ECO:0000314"/>
    <property type="project" value="MGI"/>
</dbReference>
<dbReference type="GO" id="GO:0048471">
    <property type="term" value="C:perinuclear region of cytoplasm"/>
    <property type="evidence" value="ECO:0007669"/>
    <property type="project" value="UniProtKB-SubCell"/>
</dbReference>
<dbReference type="GO" id="GO:0042383">
    <property type="term" value="C:sarcolemma"/>
    <property type="evidence" value="ECO:0000314"/>
    <property type="project" value="MGI"/>
</dbReference>
<dbReference type="GO" id="GO:0030018">
    <property type="term" value="C:Z disc"/>
    <property type="evidence" value="ECO:0000314"/>
    <property type="project" value="MGI"/>
</dbReference>
<dbReference type="GO" id="GO:0045103">
    <property type="term" value="P:intermediate filament-based process"/>
    <property type="evidence" value="ECO:0000314"/>
    <property type="project" value="MGI"/>
</dbReference>
<dbReference type="Gene3D" id="1.20.5.170">
    <property type="match status" value="1"/>
</dbReference>
<dbReference type="InterPro" id="IPR039008">
    <property type="entry name" value="IF_rod_dom"/>
</dbReference>
<dbReference type="InterPro" id="IPR027702">
    <property type="entry name" value="Syncoilin"/>
</dbReference>
<dbReference type="PANTHER" id="PTHR47147">
    <property type="entry name" value="SYNCOILIN"/>
    <property type="match status" value="1"/>
</dbReference>
<dbReference type="PANTHER" id="PTHR47147:SF1">
    <property type="entry name" value="SYNCOILIN"/>
    <property type="match status" value="1"/>
</dbReference>
<dbReference type="Pfam" id="PF00038">
    <property type="entry name" value="Filament"/>
    <property type="match status" value="1"/>
</dbReference>
<dbReference type="SMART" id="SM01391">
    <property type="entry name" value="Filament"/>
    <property type="match status" value="1"/>
</dbReference>
<dbReference type="SUPFAM" id="SSF64593">
    <property type="entry name" value="Intermediate filament protein, coiled coil region"/>
    <property type="match status" value="1"/>
</dbReference>
<dbReference type="PROSITE" id="PS51842">
    <property type="entry name" value="IF_ROD_2"/>
    <property type="match status" value="1"/>
</dbReference>